<accession>Q9SZ05</accession>
<accession>C0SVL4</accession>
<sequence length="397" mass="45678">MASSMASNDFQLPPRFFTVFVSHFSSEFMVIPVSYYDHIPHRFPKTVILRGPGGCSWKVATEIKDDEVLFSQGWPKFVRDNTLNDGDFLTFAYNGAHIFEVSIFRGYDACKEISEVTELEEEEEDSVISLSSEDTDTGAKSEMKNTVPEGRDKGKSKVEVVEDSDDDEEEDSVYSESSEETETDTDSEFKVAKPTIPKSQKKGKKKEQVVESSDDEEDEEEDSDSDYIETFGQLDIEENSISEEDSSYAPDKEDTATASFVKPKVANKVANLKRKEAAKKRKKVDPMIKNPERYLDDPKNIHFETNVKNRLYELLVHAQLVKDYCLRFGDYVNYIDRFGKLSAKTAKWKDQRVCIKRWMRICKRNKLKKEDRILCELLRKGTFVYAIKLHVIRGKDL</sequence>
<dbReference type="EMBL" id="AL035521">
    <property type="protein sequence ID" value="CAB36717.1"/>
    <property type="status" value="ALT_SEQ"/>
    <property type="molecule type" value="Genomic_DNA"/>
</dbReference>
<dbReference type="EMBL" id="AL161585">
    <property type="protein sequence ID" value="CAB80157.1"/>
    <property type="status" value="ALT_SEQ"/>
    <property type="molecule type" value="Genomic_DNA"/>
</dbReference>
<dbReference type="EMBL" id="CP002687">
    <property type="protein sequence ID" value="AEE86368.1"/>
    <property type="molecule type" value="Genomic_DNA"/>
</dbReference>
<dbReference type="EMBL" id="CP002687">
    <property type="protein sequence ID" value="ANM67235.1"/>
    <property type="molecule type" value="Genomic_DNA"/>
</dbReference>
<dbReference type="EMBL" id="AB493717">
    <property type="protein sequence ID" value="BAH30555.1"/>
    <property type="molecule type" value="mRNA"/>
</dbReference>
<dbReference type="PIR" id="T04786">
    <property type="entry name" value="T04786"/>
</dbReference>
<dbReference type="RefSeq" id="NP_001320135.1">
    <property type="nucleotide sequence ID" value="NM_001342283.1"/>
</dbReference>
<dbReference type="RefSeq" id="NP_195166.2">
    <property type="nucleotide sequence ID" value="NM_119605.3"/>
</dbReference>
<dbReference type="SMR" id="Q9SZ05"/>
<dbReference type="BioGRID" id="14872">
    <property type="interactions" value="7"/>
</dbReference>
<dbReference type="FunCoup" id="Q9SZ05">
    <property type="interactions" value="20"/>
</dbReference>
<dbReference type="IntAct" id="Q9SZ05">
    <property type="interactions" value="7"/>
</dbReference>
<dbReference type="STRING" id="3702.Q9SZ05"/>
<dbReference type="iPTMnet" id="Q9SZ05"/>
<dbReference type="PaxDb" id="3702-AT4G34400.1"/>
<dbReference type="EnsemblPlants" id="AT4G34400.1">
    <property type="protein sequence ID" value="AT4G34400.1"/>
    <property type="gene ID" value="AT4G34400"/>
</dbReference>
<dbReference type="EnsemblPlants" id="AT4G34400.2">
    <property type="protein sequence ID" value="AT4G34400.2"/>
    <property type="gene ID" value="AT4G34400"/>
</dbReference>
<dbReference type="GeneID" id="829590"/>
<dbReference type="Gramene" id="AT4G34400.1">
    <property type="protein sequence ID" value="AT4G34400.1"/>
    <property type="gene ID" value="AT4G34400"/>
</dbReference>
<dbReference type="Gramene" id="AT4G34400.2">
    <property type="protein sequence ID" value="AT4G34400.2"/>
    <property type="gene ID" value="AT4G34400"/>
</dbReference>
<dbReference type="KEGG" id="ath:AT4G34400"/>
<dbReference type="Araport" id="AT4G34400"/>
<dbReference type="TAIR" id="AT4G34400">
    <property type="gene designation" value="TFS1"/>
</dbReference>
<dbReference type="eggNOG" id="ENOG502S4ID">
    <property type="taxonomic scope" value="Eukaryota"/>
</dbReference>
<dbReference type="HOGENOM" id="CLU_048511_1_1_1"/>
<dbReference type="InParanoid" id="Q9SZ05"/>
<dbReference type="OMA" id="VYAIKLH"/>
<dbReference type="PhylomeDB" id="Q9SZ05"/>
<dbReference type="PRO" id="PR:Q9SZ05"/>
<dbReference type="Proteomes" id="UP000006548">
    <property type="component" value="Chromosome 4"/>
</dbReference>
<dbReference type="ExpressionAtlas" id="Q9SZ05">
    <property type="expression patterns" value="baseline and differential"/>
</dbReference>
<dbReference type="GO" id="GO:0005634">
    <property type="term" value="C:nucleus"/>
    <property type="evidence" value="ECO:0007669"/>
    <property type="project" value="UniProtKB-SubCell"/>
</dbReference>
<dbReference type="GO" id="GO:0003677">
    <property type="term" value="F:DNA binding"/>
    <property type="evidence" value="ECO:0007669"/>
    <property type="project" value="UniProtKB-KW"/>
</dbReference>
<dbReference type="CDD" id="cd10017">
    <property type="entry name" value="B3_DNA"/>
    <property type="match status" value="1"/>
</dbReference>
<dbReference type="Gene3D" id="2.40.330.10">
    <property type="entry name" value="DNA-binding pseudobarrel domain"/>
    <property type="match status" value="1"/>
</dbReference>
<dbReference type="InterPro" id="IPR003340">
    <property type="entry name" value="B3_DNA-bd"/>
</dbReference>
<dbReference type="InterPro" id="IPR015300">
    <property type="entry name" value="DNA-bd_pseudobarrel_sf"/>
</dbReference>
<dbReference type="InterPro" id="IPR050655">
    <property type="entry name" value="Plant_B3_domain"/>
</dbReference>
<dbReference type="PANTHER" id="PTHR31920">
    <property type="entry name" value="B3 DOMAIN-CONTAINING"/>
    <property type="match status" value="1"/>
</dbReference>
<dbReference type="PANTHER" id="PTHR31920:SF54">
    <property type="entry name" value="B3 DOMAIN-CONTAINING PROTEIN REM21"/>
    <property type="match status" value="1"/>
</dbReference>
<dbReference type="Pfam" id="PF02362">
    <property type="entry name" value="B3"/>
    <property type="match status" value="1"/>
</dbReference>
<dbReference type="SMART" id="SM01019">
    <property type="entry name" value="B3"/>
    <property type="match status" value="2"/>
</dbReference>
<dbReference type="SUPFAM" id="SSF101936">
    <property type="entry name" value="DNA-binding pseudobarrel domain"/>
    <property type="match status" value="2"/>
</dbReference>
<dbReference type="PROSITE" id="PS50863">
    <property type="entry name" value="B3"/>
    <property type="match status" value="1"/>
</dbReference>
<protein>
    <recommendedName>
        <fullName>B3 domain-containing protein At4g34400</fullName>
    </recommendedName>
</protein>
<gene>
    <name type="ordered locus">At4g34400</name>
    <name type="ORF">F10M10.170</name>
</gene>
<evidence type="ECO:0000255" key="1">
    <source>
        <dbReference type="PROSITE-ProRule" id="PRU00326"/>
    </source>
</evidence>
<evidence type="ECO:0000256" key="2">
    <source>
        <dbReference type="SAM" id="MobiDB-lite"/>
    </source>
</evidence>
<evidence type="ECO:0000305" key="3"/>
<comment type="subcellular location">
    <subcellularLocation>
        <location evidence="1">Nucleus</location>
    </subcellularLocation>
</comment>
<comment type="sequence caution" evidence="3">
    <conflict type="erroneous gene model prediction">
        <sequence resource="EMBL-CDS" id="CAB36717"/>
    </conflict>
</comment>
<comment type="sequence caution" evidence="3">
    <conflict type="erroneous gene model prediction">
        <sequence resource="EMBL-CDS" id="CAB80157"/>
    </conflict>
</comment>
<name>Y3440_ARATH</name>
<reference key="1">
    <citation type="journal article" date="1999" name="Nature">
        <title>Sequence and analysis of chromosome 4 of the plant Arabidopsis thaliana.</title>
        <authorList>
            <person name="Mayer K.F.X."/>
            <person name="Schueller C."/>
            <person name="Wambutt R."/>
            <person name="Murphy G."/>
            <person name="Volckaert G."/>
            <person name="Pohl T."/>
            <person name="Duesterhoeft A."/>
            <person name="Stiekema W."/>
            <person name="Entian K.-D."/>
            <person name="Terryn N."/>
            <person name="Harris B."/>
            <person name="Ansorge W."/>
            <person name="Brandt P."/>
            <person name="Grivell L.A."/>
            <person name="Rieger M."/>
            <person name="Weichselgartner M."/>
            <person name="de Simone V."/>
            <person name="Obermaier B."/>
            <person name="Mache R."/>
            <person name="Mueller M."/>
            <person name="Kreis M."/>
            <person name="Delseny M."/>
            <person name="Puigdomenech P."/>
            <person name="Watson M."/>
            <person name="Schmidtheini T."/>
            <person name="Reichert B."/>
            <person name="Portetelle D."/>
            <person name="Perez-Alonso M."/>
            <person name="Boutry M."/>
            <person name="Bancroft I."/>
            <person name="Vos P."/>
            <person name="Hoheisel J."/>
            <person name="Zimmermann W."/>
            <person name="Wedler H."/>
            <person name="Ridley P."/>
            <person name="Langham S.-A."/>
            <person name="McCullagh B."/>
            <person name="Bilham L."/>
            <person name="Robben J."/>
            <person name="van der Schueren J."/>
            <person name="Grymonprez B."/>
            <person name="Chuang Y.-J."/>
            <person name="Vandenbussche F."/>
            <person name="Braeken M."/>
            <person name="Weltjens I."/>
            <person name="Voet M."/>
            <person name="Bastiaens I."/>
            <person name="Aert R."/>
            <person name="Defoor E."/>
            <person name="Weitzenegger T."/>
            <person name="Bothe G."/>
            <person name="Ramsperger U."/>
            <person name="Hilbert H."/>
            <person name="Braun M."/>
            <person name="Holzer E."/>
            <person name="Brandt A."/>
            <person name="Peters S."/>
            <person name="van Staveren M."/>
            <person name="Dirkse W."/>
            <person name="Mooijman P."/>
            <person name="Klein Lankhorst R."/>
            <person name="Rose M."/>
            <person name="Hauf J."/>
            <person name="Koetter P."/>
            <person name="Berneiser S."/>
            <person name="Hempel S."/>
            <person name="Feldpausch M."/>
            <person name="Lamberth S."/>
            <person name="Van den Daele H."/>
            <person name="De Keyser A."/>
            <person name="Buysshaert C."/>
            <person name="Gielen J."/>
            <person name="Villarroel R."/>
            <person name="De Clercq R."/>
            <person name="van Montagu M."/>
            <person name="Rogers J."/>
            <person name="Cronin A."/>
            <person name="Quail M.A."/>
            <person name="Bray-Allen S."/>
            <person name="Clark L."/>
            <person name="Doggett J."/>
            <person name="Hall S."/>
            <person name="Kay M."/>
            <person name="Lennard N."/>
            <person name="McLay K."/>
            <person name="Mayes R."/>
            <person name="Pettett A."/>
            <person name="Rajandream M.A."/>
            <person name="Lyne M."/>
            <person name="Benes V."/>
            <person name="Rechmann S."/>
            <person name="Borkova D."/>
            <person name="Bloecker H."/>
            <person name="Scharfe M."/>
            <person name="Grimm M."/>
            <person name="Loehnert T.-H."/>
            <person name="Dose S."/>
            <person name="de Haan M."/>
            <person name="Maarse A.C."/>
            <person name="Schaefer M."/>
            <person name="Mueller-Auer S."/>
            <person name="Gabel C."/>
            <person name="Fuchs M."/>
            <person name="Fartmann B."/>
            <person name="Granderath K."/>
            <person name="Dauner D."/>
            <person name="Herzl A."/>
            <person name="Neumann S."/>
            <person name="Argiriou A."/>
            <person name="Vitale D."/>
            <person name="Liguori R."/>
            <person name="Piravandi E."/>
            <person name="Massenet O."/>
            <person name="Quigley F."/>
            <person name="Clabauld G."/>
            <person name="Muendlein A."/>
            <person name="Felber R."/>
            <person name="Schnabl S."/>
            <person name="Hiller R."/>
            <person name="Schmidt W."/>
            <person name="Lecharny A."/>
            <person name="Aubourg S."/>
            <person name="Chefdor F."/>
            <person name="Cooke R."/>
            <person name="Berger C."/>
            <person name="Monfort A."/>
            <person name="Casacuberta E."/>
            <person name="Gibbons T."/>
            <person name="Weber N."/>
            <person name="Vandenbol M."/>
            <person name="Bargues M."/>
            <person name="Terol J."/>
            <person name="Torres A."/>
            <person name="Perez-Perez A."/>
            <person name="Purnelle B."/>
            <person name="Bent E."/>
            <person name="Johnson S."/>
            <person name="Tacon D."/>
            <person name="Jesse T."/>
            <person name="Heijnen L."/>
            <person name="Schwarz S."/>
            <person name="Scholler P."/>
            <person name="Heber S."/>
            <person name="Francs P."/>
            <person name="Bielke C."/>
            <person name="Frishman D."/>
            <person name="Haase D."/>
            <person name="Lemcke K."/>
            <person name="Mewes H.-W."/>
            <person name="Stocker S."/>
            <person name="Zaccaria P."/>
            <person name="Bevan M."/>
            <person name="Wilson R.K."/>
            <person name="de la Bastide M."/>
            <person name="Habermann K."/>
            <person name="Parnell L."/>
            <person name="Dedhia N."/>
            <person name="Gnoj L."/>
            <person name="Schutz K."/>
            <person name="Huang E."/>
            <person name="Spiegel L."/>
            <person name="Sekhon M."/>
            <person name="Murray J."/>
            <person name="Sheet P."/>
            <person name="Cordes M."/>
            <person name="Abu-Threideh J."/>
            <person name="Stoneking T."/>
            <person name="Kalicki J."/>
            <person name="Graves T."/>
            <person name="Harmon G."/>
            <person name="Edwards J."/>
            <person name="Latreille P."/>
            <person name="Courtney L."/>
            <person name="Cloud J."/>
            <person name="Abbott A."/>
            <person name="Scott K."/>
            <person name="Johnson D."/>
            <person name="Minx P."/>
            <person name="Bentley D."/>
            <person name="Fulton B."/>
            <person name="Miller N."/>
            <person name="Greco T."/>
            <person name="Kemp K."/>
            <person name="Kramer J."/>
            <person name="Fulton L."/>
            <person name="Mardis E."/>
            <person name="Dante M."/>
            <person name="Pepin K."/>
            <person name="Hillier L.W."/>
            <person name="Nelson J."/>
            <person name="Spieth J."/>
            <person name="Ryan E."/>
            <person name="Andrews S."/>
            <person name="Geisel C."/>
            <person name="Layman D."/>
            <person name="Du H."/>
            <person name="Ali J."/>
            <person name="Berghoff A."/>
            <person name="Jones K."/>
            <person name="Drone K."/>
            <person name="Cotton M."/>
            <person name="Joshu C."/>
            <person name="Antonoiu B."/>
            <person name="Zidanic M."/>
            <person name="Strong C."/>
            <person name="Sun H."/>
            <person name="Lamar B."/>
            <person name="Yordan C."/>
            <person name="Ma P."/>
            <person name="Zhong J."/>
            <person name="Preston R."/>
            <person name="Vil D."/>
            <person name="Shekher M."/>
            <person name="Matero A."/>
            <person name="Shah R."/>
            <person name="Swaby I.K."/>
            <person name="O'Shaughnessy A."/>
            <person name="Rodriguez M."/>
            <person name="Hoffman J."/>
            <person name="Till S."/>
            <person name="Granat S."/>
            <person name="Shohdy N."/>
            <person name="Hasegawa A."/>
            <person name="Hameed A."/>
            <person name="Lodhi M."/>
            <person name="Johnson A."/>
            <person name="Chen E."/>
            <person name="Marra M.A."/>
            <person name="Martienssen R."/>
            <person name="McCombie W.R."/>
        </authorList>
    </citation>
    <scope>NUCLEOTIDE SEQUENCE [LARGE SCALE GENOMIC DNA]</scope>
    <source>
        <strain>cv. Columbia</strain>
    </source>
</reference>
<reference key="2">
    <citation type="journal article" date="2017" name="Plant J.">
        <title>Araport11: a complete reannotation of the Arabidopsis thaliana reference genome.</title>
        <authorList>
            <person name="Cheng C.Y."/>
            <person name="Krishnakumar V."/>
            <person name="Chan A.P."/>
            <person name="Thibaud-Nissen F."/>
            <person name="Schobel S."/>
            <person name="Town C.D."/>
        </authorList>
    </citation>
    <scope>GENOME REANNOTATION</scope>
    <source>
        <strain>cv. Columbia</strain>
    </source>
</reference>
<reference key="3">
    <citation type="submission" date="2009-03" db="EMBL/GenBank/DDBJ databases">
        <title>ORF cloning and analysis of Arabidopsis transcription factor genes.</title>
        <authorList>
            <person name="Fujita M."/>
            <person name="Mizukado S."/>
            <person name="Seki M."/>
            <person name="Shinozaki K."/>
            <person name="Mitsuda N."/>
            <person name="Takiguchi Y."/>
            <person name="Takagi M."/>
        </authorList>
    </citation>
    <scope>NUCLEOTIDE SEQUENCE [LARGE SCALE MRNA]</scope>
</reference>
<reference key="4">
    <citation type="journal article" date="2008" name="Trends Plant Sci.">
        <title>The plant B3 superfamily.</title>
        <authorList>
            <person name="Swaminathan K."/>
            <person name="Peterson K."/>
            <person name="Jack T."/>
        </authorList>
    </citation>
    <scope>GENE FAMILY</scope>
</reference>
<organism>
    <name type="scientific">Arabidopsis thaliana</name>
    <name type="common">Mouse-ear cress</name>
    <dbReference type="NCBI Taxonomy" id="3702"/>
    <lineage>
        <taxon>Eukaryota</taxon>
        <taxon>Viridiplantae</taxon>
        <taxon>Streptophyta</taxon>
        <taxon>Embryophyta</taxon>
        <taxon>Tracheophyta</taxon>
        <taxon>Spermatophyta</taxon>
        <taxon>Magnoliopsida</taxon>
        <taxon>eudicotyledons</taxon>
        <taxon>Gunneridae</taxon>
        <taxon>Pentapetalae</taxon>
        <taxon>rosids</taxon>
        <taxon>malvids</taxon>
        <taxon>Brassicales</taxon>
        <taxon>Brassicaceae</taxon>
        <taxon>Camelineae</taxon>
        <taxon>Arabidopsis</taxon>
    </lineage>
</organism>
<keyword id="KW-0238">DNA-binding</keyword>
<keyword id="KW-0539">Nucleus</keyword>
<keyword id="KW-1185">Reference proteome</keyword>
<keyword id="KW-0804">Transcription</keyword>
<keyword id="KW-0805">Transcription regulation</keyword>
<proteinExistence type="evidence at transcript level"/>
<feature type="chain" id="PRO_0000375138" description="B3 domain-containing protein At4g34400">
    <location>
        <begin position="1"/>
        <end position="397"/>
    </location>
</feature>
<feature type="DNA-binding region" description="TF-B3" evidence="1">
    <location>
        <begin position="14"/>
        <end position="107"/>
    </location>
</feature>
<feature type="region of interest" description="Disordered" evidence="2">
    <location>
        <begin position="118"/>
        <end position="255"/>
    </location>
</feature>
<feature type="compositionally biased region" description="Basic and acidic residues" evidence="2">
    <location>
        <begin position="137"/>
        <end position="160"/>
    </location>
</feature>
<feature type="compositionally biased region" description="Acidic residues" evidence="2">
    <location>
        <begin position="161"/>
        <end position="186"/>
    </location>
</feature>
<feature type="compositionally biased region" description="Acidic residues" evidence="2">
    <location>
        <begin position="212"/>
        <end position="227"/>
    </location>
</feature>
<feature type="compositionally biased region" description="Acidic residues" evidence="2">
    <location>
        <begin position="235"/>
        <end position="246"/>
    </location>
</feature>